<reference key="1">
    <citation type="journal article" date="2002" name="J. Bacteriol.">
        <title>Whole-genome comparison of Mycobacterium tuberculosis clinical and laboratory strains.</title>
        <authorList>
            <person name="Fleischmann R.D."/>
            <person name="Alland D."/>
            <person name="Eisen J.A."/>
            <person name="Carpenter L."/>
            <person name="White O."/>
            <person name="Peterson J.D."/>
            <person name="DeBoy R.T."/>
            <person name="Dodson R.J."/>
            <person name="Gwinn M.L."/>
            <person name="Haft D.H."/>
            <person name="Hickey E.K."/>
            <person name="Kolonay J.F."/>
            <person name="Nelson W.C."/>
            <person name="Umayam L.A."/>
            <person name="Ermolaeva M.D."/>
            <person name="Salzberg S.L."/>
            <person name="Delcher A."/>
            <person name="Utterback T.R."/>
            <person name="Weidman J.F."/>
            <person name="Khouri H.M."/>
            <person name="Gill J."/>
            <person name="Mikula A."/>
            <person name="Bishai W."/>
            <person name="Jacobs W.R. Jr."/>
            <person name="Venter J.C."/>
            <person name="Fraser C.M."/>
        </authorList>
    </citation>
    <scope>NUCLEOTIDE SEQUENCE [LARGE SCALE GENOMIC DNA]</scope>
    <source>
        <strain>CDC 1551 / Oshkosh</strain>
    </source>
</reference>
<dbReference type="EMBL" id="AE000516">
    <property type="protein sequence ID" value="AAK46537.1"/>
    <property type="molecule type" value="Genomic_DNA"/>
</dbReference>
<dbReference type="PIR" id="D70784">
    <property type="entry name" value="D70784"/>
</dbReference>
<dbReference type="SMR" id="P9WH22"/>
<dbReference type="KEGG" id="mtc:MT2251"/>
<dbReference type="PATRIC" id="fig|83331.31.peg.2426"/>
<dbReference type="HOGENOM" id="CLU_050668_0_0_11"/>
<dbReference type="Proteomes" id="UP000001020">
    <property type="component" value="Chromosome"/>
</dbReference>
<dbReference type="GO" id="GO:0005886">
    <property type="term" value="C:plasma membrane"/>
    <property type="evidence" value="ECO:0007669"/>
    <property type="project" value="UniProtKB-SubCell"/>
</dbReference>
<dbReference type="GO" id="GO:0051537">
    <property type="term" value="F:2 iron, 2 sulfur cluster binding"/>
    <property type="evidence" value="ECO:0007669"/>
    <property type="project" value="UniProtKB-KW"/>
</dbReference>
<dbReference type="GO" id="GO:0046872">
    <property type="term" value="F:metal ion binding"/>
    <property type="evidence" value="ECO:0007669"/>
    <property type="project" value="UniProtKB-KW"/>
</dbReference>
<dbReference type="GO" id="GO:0004497">
    <property type="term" value="F:monooxygenase activity"/>
    <property type="evidence" value="ECO:0007669"/>
    <property type="project" value="UniProtKB-ARBA"/>
</dbReference>
<dbReference type="GO" id="GO:0016705">
    <property type="term" value="F:oxidoreductase activity, acting on paired donors, with incorporation or reduction of molecular oxygen"/>
    <property type="evidence" value="ECO:0007669"/>
    <property type="project" value="UniProtKB-ARBA"/>
</dbReference>
<dbReference type="CDD" id="cd03467">
    <property type="entry name" value="Rieske"/>
    <property type="match status" value="1"/>
</dbReference>
<dbReference type="FunFam" id="2.102.10.10:FF:000010">
    <property type="entry name" value="Ubiquinol-cytochrome c reductase iron-sulfur subunit"/>
    <property type="match status" value="1"/>
</dbReference>
<dbReference type="Gene3D" id="2.102.10.10">
    <property type="entry name" value="Rieske [2Fe-2S] iron-sulphur domain"/>
    <property type="match status" value="1"/>
</dbReference>
<dbReference type="InterPro" id="IPR045603">
    <property type="entry name" value="QcrA_N"/>
</dbReference>
<dbReference type="InterPro" id="IPR017941">
    <property type="entry name" value="Rieske_2Fe-2S"/>
</dbReference>
<dbReference type="InterPro" id="IPR036922">
    <property type="entry name" value="Rieske_2Fe-2S_sf"/>
</dbReference>
<dbReference type="InterPro" id="IPR014349">
    <property type="entry name" value="Rieske_Fe-S_prot"/>
</dbReference>
<dbReference type="PANTHER" id="PTHR10134">
    <property type="entry name" value="CYTOCHROME B-C1 COMPLEX SUBUNIT RIESKE, MITOCHONDRIAL"/>
    <property type="match status" value="1"/>
</dbReference>
<dbReference type="Pfam" id="PF19297">
    <property type="entry name" value="QcrA_N"/>
    <property type="match status" value="1"/>
</dbReference>
<dbReference type="Pfam" id="PF00355">
    <property type="entry name" value="Rieske"/>
    <property type="match status" value="1"/>
</dbReference>
<dbReference type="SUPFAM" id="SSF50022">
    <property type="entry name" value="ISP domain"/>
    <property type="match status" value="1"/>
</dbReference>
<dbReference type="PROSITE" id="PS51296">
    <property type="entry name" value="RIESKE"/>
    <property type="match status" value="1"/>
</dbReference>
<comment type="function">
    <text evidence="1">Iron-sulfur subunit of the cytochrome bc1 complex, an essential component of the respiratory electron transport chain required for ATP synthesis. The bc1 complex catalyzes the oxidation of menaquinol and the reduction of cytochrome c in the respiratory chain. The bc1 complex operates through a Q-cycle mechanism that couples electron transfer to generation of the proton gradient that drives ATP synthesis.</text>
</comment>
<comment type="cofactor">
    <cofactor evidence="3">
        <name>[2Fe-2S] cluster</name>
        <dbReference type="ChEBI" id="CHEBI:190135"/>
    </cofactor>
    <text evidence="3">Binds 1 [2Fe-2S] cluster per subunit.</text>
</comment>
<comment type="subunit">
    <text evidence="1">The cytochrome bc1 complex is composed of a cytochrome b (QcrB), the Rieske iron-sulfur protein (QcrA) and a diheme cytochrome c (QcrC) subunit.</text>
</comment>
<comment type="subcellular location">
    <subcellularLocation>
        <location evidence="2">Cell membrane</location>
        <topology evidence="2">Multi-pass membrane protein</topology>
    </subcellularLocation>
</comment>
<comment type="similarity">
    <text evidence="5">Belongs to the Rieske iron-sulfur protein family.</text>
</comment>
<sequence length="429" mass="46923">MSRADDDAVGVPPTCGGRSDEEERRIVPGPNPQDGAKDGAKATAVPREPDEAALAAMSNQELLALGGKLDGVRIAYKEPRWPVEGTKAEKRAERSVAVWLLLGGVFGLALLLIFLFWPWEFKAADGESDFIYSLTTPLYGLTFGLSILSIAIGAVLYQKRFIPEEISIQERHDGASREIDRKTVVANLTDAFEGSTIRRRKLIGLSFGVGMGAFGLGTLVAFAGGLIKNPWKPVVPTAEGKKAVLWTSGWTPRYQGETIYLARATGTEDGPPFIKMRPEDMDAGGMETVFPWRESDGDGTTVESHHKLQEIAMGIRNPVMLIRIKPSDLGRVVKRKGQESFNFGEFFAFTKVCSHLGCPSSLYEQQSYRILCPCHQSQFDALHFAKPIFGPAARALAQLPITIDTDGYLVANGDFVEPVGPAFWERTTT</sequence>
<feature type="chain" id="PRO_0000428262" description="Cytochrome bc1 complex Rieske iron-sulfur subunit">
    <location>
        <begin position="1"/>
        <end position="429"/>
    </location>
</feature>
<feature type="transmembrane region" description="Helical" evidence="2">
    <location>
        <begin position="96"/>
        <end position="116"/>
    </location>
</feature>
<feature type="transmembrane region" description="Helical" evidence="2">
    <location>
        <begin position="137"/>
        <end position="157"/>
    </location>
</feature>
<feature type="transmembrane region" description="Helical" evidence="2">
    <location>
        <begin position="207"/>
        <end position="227"/>
    </location>
</feature>
<feature type="domain" description="Rieske" evidence="3">
    <location>
        <begin position="316"/>
        <end position="410"/>
    </location>
</feature>
<feature type="region of interest" description="Disordered" evidence="4">
    <location>
        <begin position="1"/>
        <end position="45"/>
    </location>
</feature>
<feature type="binding site" evidence="3">
    <location>
        <position position="353"/>
    </location>
    <ligand>
        <name>[2Fe-2S] cluster</name>
        <dbReference type="ChEBI" id="CHEBI:190135"/>
    </ligand>
</feature>
<feature type="binding site" evidence="3">
    <location>
        <position position="355"/>
    </location>
    <ligand>
        <name>[2Fe-2S] cluster</name>
        <dbReference type="ChEBI" id="CHEBI:190135"/>
    </ligand>
</feature>
<feature type="binding site" evidence="3">
    <location>
        <position position="372"/>
    </location>
    <ligand>
        <name>[2Fe-2S] cluster</name>
        <dbReference type="ChEBI" id="CHEBI:190135"/>
    </ligand>
</feature>
<feature type="binding site" evidence="3">
    <location>
        <position position="375"/>
    </location>
    <ligand>
        <name>[2Fe-2S] cluster</name>
        <dbReference type="ChEBI" id="CHEBI:190135"/>
    </ligand>
</feature>
<feature type="disulfide bond" evidence="3">
    <location>
        <begin position="358"/>
        <end position="374"/>
    </location>
</feature>
<gene>
    <name type="primary">qcrA</name>
    <name type="ordered locus">MT2251</name>
</gene>
<organism>
    <name type="scientific">Mycobacterium tuberculosis (strain CDC 1551 / Oshkosh)</name>
    <dbReference type="NCBI Taxonomy" id="83331"/>
    <lineage>
        <taxon>Bacteria</taxon>
        <taxon>Bacillati</taxon>
        <taxon>Actinomycetota</taxon>
        <taxon>Actinomycetes</taxon>
        <taxon>Mycobacteriales</taxon>
        <taxon>Mycobacteriaceae</taxon>
        <taxon>Mycobacterium</taxon>
        <taxon>Mycobacterium tuberculosis complex</taxon>
    </lineage>
</organism>
<name>QCRA_MYCTO</name>
<proteinExistence type="inferred from homology"/>
<evidence type="ECO:0000250" key="1">
    <source>
        <dbReference type="UniProtKB" id="P9WH23"/>
    </source>
</evidence>
<evidence type="ECO:0000255" key="2"/>
<evidence type="ECO:0000255" key="3">
    <source>
        <dbReference type="PROSITE-ProRule" id="PRU00628"/>
    </source>
</evidence>
<evidence type="ECO:0000256" key="4">
    <source>
        <dbReference type="SAM" id="MobiDB-lite"/>
    </source>
</evidence>
<evidence type="ECO:0000305" key="5"/>
<protein>
    <recommendedName>
        <fullName>Cytochrome bc1 complex Rieske iron-sulfur subunit</fullName>
    </recommendedName>
    <alternativeName>
        <fullName>Cytochrome bc1 reductase complex subunit QcrA</fullName>
    </alternativeName>
    <alternativeName>
        <fullName>Rieske iron-sulfur protein</fullName>
    </alternativeName>
    <alternativeName>
        <fullName>Ubiquinol--cytochrome c reductase iron-sulfur subunit</fullName>
    </alternativeName>
</protein>
<keyword id="KW-0001">2Fe-2S</keyword>
<keyword id="KW-1003">Cell membrane</keyword>
<keyword id="KW-1015">Disulfide bond</keyword>
<keyword id="KW-0249">Electron transport</keyword>
<keyword id="KW-0408">Iron</keyword>
<keyword id="KW-0411">Iron-sulfur</keyword>
<keyword id="KW-0472">Membrane</keyword>
<keyword id="KW-0479">Metal-binding</keyword>
<keyword id="KW-0560">Oxidoreductase</keyword>
<keyword id="KW-1185">Reference proteome</keyword>
<keyword id="KW-0679">Respiratory chain</keyword>
<keyword id="KW-0812">Transmembrane</keyword>
<keyword id="KW-1133">Transmembrane helix</keyword>
<keyword id="KW-0813">Transport</keyword>
<accession>P9WH22</accession>
<accession>L0TBK9</accession>
<accession>Q10387</accession>